<evidence type="ECO:0000250" key="1"/>
<evidence type="ECO:0000255" key="2"/>
<evidence type="ECO:0000305" key="3"/>
<reference key="1">
    <citation type="journal article" date="2012" name="Proteomics">
        <title>Molecular diversity of the telson and venom components from Pandinus cavimanus (Scorpionidae Latreille 1802): transcriptome, venomics and function.</title>
        <authorList>
            <person name="Diego-Garcia E."/>
            <person name="Peigneur S."/>
            <person name="Clynen E."/>
            <person name="Marien T."/>
            <person name="Czech L."/>
            <person name="Schoofs L."/>
            <person name="Tytgat J."/>
        </authorList>
    </citation>
    <scope>NUCLEOTIDE SEQUENCE [MRNA]</scope>
    <source>
        <tissue>Venom gland</tissue>
    </source>
</reference>
<name>LA1_PANCV</name>
<dbReference type="EMBL" id="JN315721">
    <property type="protein sequence ID" value="AEX09199.1"/>
    <property type="molecule type" value="mRNA"/>
</dbReference>
<dbReference type="SMR" id="H2CYP1"/>
<dbReference type="GO" id="GO:0005576">
    <property type="term" value="C:extracellular region"/>
    <property type="evidence" value="ECO:0007669"/>
    <property type="project" value="UniProtKB-SubCell"/>
</dbReference>
<dbReference type="GO" id="GO:0090729">
    <property type="term" value="F:toxin activity"/>
    <property type="evidence" value="ECO:0007669"/>
    <property type="project" value="UniProtKB-KW"/>
</dbReference>
<dbReference type="InterPro" id="IPR029277">
    <property type="entry name" value="SVWC_dom"/>
</dbReference>
<dbReference type="Pfam" id="PF15430">
    <property type="entry name" value="SVWC"/>
    <property type="match status" value="1"/>
</dbReference>
<dbReference type="SMART" id="SM01318">
    <property type="entry name" value="SVWC"/>
    <property type="match status" value="1"/>
</dbReference>
<feature type="signal peptide" evidence="2">
    <location>
        <begin position="1"/>
        <end position="20"/>
    </location>
</feature>
<feature type="chain" id="PRO_0000428819" description="Venom peptide Pc">
    <location>
        <begin position="21"/>
        <end position="101"/>
    </location>
</feature>
<organism>
    <name type="scientific">Pandinus cavimanus</name>
    <name type="common">Tanzanian red clawed scorpion</name>
    <dbReference type="NCBI Taxonomy" id="217261"/>
    <lineage>
        <taxon>Eukaryota</taxon>
        <taxon>Metazoa</taxon>
        <taxon>Ecdysozoa</taxon>
        <taxon>Arthropoda</taxon>
        <taxon>Chelicerata</taxon>
        <taxon>Arachnida</taxon>
        <taxon>Scorpiones</taxon>
        <taxon>Iurida</taxon>
        <taxon>Scorpionoidea</taxon>
        <taxon>Scorpionidae</taxon>
        <taxon>Pandininae</taxon>
        <taxon>Pandinus</taxon>
    </lineage>
</organism>
<sequence length="101" mass="11207">MSHLRIAVIFLCTLFALTAGAEESCQVGGLTIPVGKTQQDRCTLYECTMESNRVVLKSMICAEQSLRRGCKRVPAQATAPFPDCCPTTLCRGRQWDRPRTL</sequence>
<accession>H2CYP1</accession>
<protein>
    <recommendedName>
        <fullName>Venom peptide Pc</fullName>
    </recommendedName>
</protein>
<comment type="subcellular location">
    <subcellularLocation>
        <location evidence="1">Secreted</location>
    </subcellularLocation>
</comment>
<comment type="tissue specificity">
    <text>Expressed by the venom gland.</text>
</comment>
<comment type="PTM">
    <text evidence="1">Contains 4 disulfide bonds.</text>
</comment>
<comment type="similarity">
    <text evidence="3">Belongs to the scorpion La1-like peptide family.</text>
</comment>
<proteinExistence type="evidence at transcript level"/>
<keyword id="KW-1015">Disulfide bond</keyword>
<keyword id="KW-0964">Secreted</keyword>
<keyword id="KW-0732">Signal</keyword>
<keyword id="KW-0800">Toxin</keyword>